<protein>
    <recommendedName>
        <fullName>Palmitoyl-protein thioesterase 1</fullName>
        <shortName>PPT-1</shortName>
        <ecNumber evidence="3">3.1.2.2</ecNumber>
        <ecNumber evidence="3">3.1.2.22</ecNumber>
    </recommendedName>
    <alternativeName>
        <fullName>Palmitoyl-protein hydrolase 1</fullName>
    </alternativeName>
</protein>
<comment type="function">
    <text evidence="3">Has thioesterase activity against fatty acid thioesters with 14 -18 carbons, including palmitoyl-CoA, S-palmitoyl-N-acetylcysteamine, and palmitoylated proteins. In contrast to PPT2, PPT1 can hydrolyze palmitoylated proteins and palmitoylcysteine.</text>
</comment>
<comment type="catalytic activity">
    <reaction evidence="3">
        <text>S-hexadecanoyl-L-cysteinyl-[protein] + H2O = L-cysteinyl-[protein] + hexadecanoate + H(+)</text>
        <dbReference type="Rhea" id="RHEA:19233"/>
        <dbReference type="Rhea" id="RHEA-COMP:10131"/>
        <dbReference type="Rhea" id="RHEA-COMP:11032"/>
        <dbReference type="ChEBI" id="CHEBI:7896"/>
        <dbReference type="ChEBI" id="CHEBI:15377"/>
        <dbReference type="ChEBI" id="CHEBI:15378"/>
        <dbReference type="ChEBI" id="CHEBI:29950"/>
        <dbReference type="ChEBI" id="CHEBI:74151"/>
        <dbReference type="EC" id="3.1.2.22"/>
    </reaction>
</comment>
<comment type="catalytic activity">
    <reaction evidence="3">
        <text>hexadecanoyl-CoA + H2O = hexadecanoate + CoA + H(+)</text>
        <dbReference type="Rhea" id="RHEA:16645"/>
        <dbReference type="ChEBI" id="CHEBI:7896"/>
        <dbReference type="ChEBI" id="CHEBI:15377"/>
        <dbReference type="ChEBI" id="CHEBI:15378"/>
        <dbReference type="ChEBI" id="CHEBI:57287"/>
        <dbReference type="ChEBI" id="CHEBI:57379"/>
        <dbReference type="EC" id="3.1.2.2"/>
    </reaction>
    <physiologicalReaction direction="left-to-right" evidence="3">
        <dbReference type="Rhea" id="RHEA:16646"/>
    </physiologicalReaction>
</comment>
<comment type="catalytic activity">
    <reaction evidence="3">
        <text>S-hexadecanoyl-N-acetylcysteamine + H2O = N-acetylcysteamine + hexadecanoate + H(+)</text>
        <dbReference type="Rhea" id="RHEA:84099"/>
        <dbReference type="ChEBI" id="CHEBI:7896"/>
        <dbReference type="ChEBI" id="CHEBI:15377"/>
        <dbReference type="ChEBI" id="CHEBI:15378"/>
        <dbReference type="ChEBI" id="CHEBI:74410"/>
        <dbReference type="ChEBI" id="CHEBI:233601"/>
    </reaction>
</comment>
<comment type="catalytic activity">
    <reaction evidence="3">
        <text>S-hexadecanoyl-N-acetylcysteine methyl ester + H2O = N-acetylcysteine methyl ester + hexadecanoate + H(+)</text>
        <dbReference type="Rhea" id="RHEA:84103"/>
        <dbReference type="ChEBI" id="CHEBI:7896"/>
        <dbReference type="ChEBI" id="CHEBI:15377"/>
        <dbReference type="ChEBI" id="CHEBI:15378"/>
        <dbReference type="ChEBI" id="CHEBI:233604"/>
        <dbReference type="ChEBI" id="CHEBI:233605"/>
    </reaction>
</comment>
<comment type="activity regulation">
    <text evidence="3">Palmitoylation reduces PPT1 enzymatic activity.</text>
</comment>
<comment type="subunit">
    <text evidence="1">Interacts with CLN5, ATP5F1A and ATP5F1B.</text>
</comment>
<comment type="subcellular location">
    <subcellularLocation>
        <location evidence="3">Lysosome</location>
    </subcellularLocation>
    <subcellularLocation>
        <location evidence="3">Secreted</location>
    </subcellularLocation>
    <subcellularLocation>
        <location evidence="3">Golgi apparatus</location>
    </subcellularLocation>
    <subcellularLocation>
        <location evidence="3">Endoplasmic reticulum</location>
    </subcellularLocation>
</comment>
<comment type="PTM">
    <text evidence="2">Glycosylated.</text>
</comment>
<comment type="similarity">
    <text evidence="5">Belongs to the palmitoyl-protein thioesterase family.</text>
</comment>
<gene>
    <name type="primary">PPT1</name>
    <name type="synonym">CLN1</name>
    <name type="ORF">QnpA-18851</name>
</gene>
<accession>Q8HXW6</accession>
<dbReference type="EC" id="3.1.2.2" evidence="3"/>
<dbReference type="EC" id="3.1.2.22" evidence="3"/>
<dbReference type="EMBL" id="AB083325">
    <property type="protein sequence ID" value="BAC20604.1"/>
    <property type="molecule type" value="mRNA"/>
</dbReference>
<dbReference type="RefSeq" id="NP_001270850.1">
    <property type="nucleotide sequence ID" value="NM_001283921.1"/>
</dbReference>
<dbReference type="RefSeq" id="XP_045229727.1">
    <property type="nucleotide sequence ID" value="XM_045373792.2"/>
</dbReference>
<dbReference type="SMR" id="Q8HXW6"/>
<dbReference type="STRING" id="9541.ENSMFAP00000013735"/>
<dbReference type="ESTHER" id="macfa-PPT1">
    <property type="family name" value="Palmitoyl-protein_thioesterase"/>
</dbReference>
<dbReference type="GlyCosmos" id="Q8HXW6">
    <property type="glycosylation" value="3 sites, No reported glycans"/>
</dbReference>
<dbReference type="GeneID" id="102126191"/>
<dbReference type="VEuPathDB" id="HostDB:ENSMFAG00000029038"/>
<dbReference type="eggNOG" id="KOG2541">
    <property type="taxonomic scope" value="Eukaryota"/>
</dbReference>
<dbReference type="OMA" id="KFVMVMF"/>
<dbReference type="Proteomes" id="UP000233100">
    <property type="component" value="Chromosome 1"/>
</dbReference>
<dbReference type="GO" id="GO:0030424">
    <property type="term" value="C:axon"/>
    <property type="evidence" value="ECO:0000250"/>
    <property type="project" value="UniProtKB"/>
</dbReference>
<dbReference type="GO" id="GO:0005829">
    <property type="term" value="C:cytosol"/>
    <property type="evidence" value="ECO:0000250"/>
    <property type="project" value="UniProtKB"/>
</dbReference>
<dbReference type="GO" id="GO:0005576">
    <property type="term" value="C:extracellular region"/>
    <property type="evidence" value="ECO:0000250"/>
    <property type="project" value="UniProtKB"/>
</dbReference>
<dbReference type="GO" id="GO:0005794">
    <property type="term" value="C:Golgi apparatus"/>
    <property type="evidence" value="ECO:0000250"/>
    <property type="project" value="UniProtKB"/>
</dbReference>
<dbReference type="GO" id="GO:0005764">
    <property type="term" value="C:lysosome"/>
    <property type="evidence" value="ECO:0000250"/>
    <property type="project" value="UniProtKB"/>
</dbReference>
<dbReference type="GO" id="GO:0045121">
    <property type="term" value="C:membrane raft"/>
    <property type="evidence" value="ECO:0000250"/>
    <property type="project" value="UniProtKB"/>
</dbReference>
<dbReference type="GO" id="GO:0005634">
    <property type="term" value="C:nucleus"/>
    <property type="evidence" value="ECO:0000250"/>
    <property type="project" value="UniProtKB"/>
</dbReference>
<dbReference type="GO" id="GO:0008021">
    <property type="term" value="C:synaptic vesicle"/>
    <property type="evidence" value="ECO:0000250"/>
    <property type="project" value="UniProtKB"/>
</dbReference>
<dbReference type="GO" id="GO:0052816">
    <property type="term" value="F:long-chain fatty acyl-CoA hydrolase activity"/>
    <property type="evidence" value="ECO:0000250"/>
    <property type="project" value="UniProtKB"/>
</dbReference>
<dbReference type="GO" id="GO:0008474">
    <property type="term" value="F:palmitoyl-(protein) hydrolase activity"/>
    <property type="evidence" value="ECO:0000250"/>
    <property type="project" value="UniProtKB"/>
</dbReference>
<dbReference type="GO" id="GO:0120146">
    <property type="term" value="F:sulfatide binding"/>
    <property type="evidence" value="ECO:0000250"/>
    <property type="project" value="UniProtKB"/>
</dbReference>
<dbReference type="GO" id="GO:0016042">
    <property type="term" value="P:lipid catabolic process"/>
    <property type="evidence" value="ECO:0000250"/>
    <property type="project" value="UniProtKB"/>
</dbReference>
<dbReference type="GO" id="GO:0007042">
    <property type="term" value="P:lysosomal lumen acidification"/>
    <property type="evidence" value="ECO:0000250"/>
    <property type="project" value="UniProtKB"/>
</dbReference>
<dbReference type="GO" id="GO:0031579">
    <property type="term" value="P:membrane raft organization"/>
    <property type="evidence" value="ECO:0000250"/>
    <property type="project" value="UniProtKB"/>
</dbReference>
<dbReference type="GO" id="GO:0043066">
    <property type="term" value="P:negative regulation of apoptotic process"/>
    <property type="evidence" value="ECO:0000250"/>
    <property type="project" value="UniProtKB"/>
</dbReference>
<dbReference type="GO" id="GO:0030308">
    <property type="term" value="P:negative regulation of cell growth"/>
    <property type="evidence" value="ECO:0000250"/>
    <property type="project" value="UniProtKB"/>
</dbReference>
<dbReference type="GO" id="GO:0043524">
    <property type="term" value="P:negative regulation of neuron apoptotic process"/>
    <property type="evidence" value="ECO:0000250"/>
    <property type="project" value="UniProtKB"/>
</dbReference>
<dbReference type="GO" id="GO:0007399">
    <property type="term" value="P:nervous system development"/>
    <property type="evidence" value="ECO:0000250"/>
    <property type="project" value="UniProtKB"/>
</dbReference>
<dbReference type="GO" id="GO:0048549">
    <property type="term" value="P:positive regulation of pinocytosis"/>
    <property type="evidence" value="ECO:0000250"/>
    <property type="project" value="UniProtKB"/>
</dbReference>
<dbReference type="GO" id="GO:0048260">
    <property type="term" value="P:positive regulation of receptor-mediated endocytosis"/>
    <property type="evidence" value="ECO:0000250"/>
    <property type="project" value="UniProtKB"/>
</dbReference>
<dbReference type="GO" id="GO:0002084">
    <property type="term" value="P:protein depalmitoylation"/>
    <property type="evidence" value="ECO:0000250"/>
    <property type="project" value="UniProtKB"/>
</dbReference>
<dbReference type="GO" id="GO:0015031">
    <property type="term" value="P:protein transport"/>
    <property type="evidence" value="ECO:0000250"/>
    <property type="project" value="UniProtKB"/>
</dbReference>
<dbReference type="GO" id="GO:0006898">
    <property type="term" value="P:receptor-mediated endocytosis"/>
    <property type="evidence" value="ECO:0007669"/>
    <property type="project" value="TreeGrafter"/>
</dbReference>
<dbReference type="FunFam" id="3.40.50.1820:FF:000098">
    <property type="entry name" value="palmitoyl-protein thioesterase 1"/>
    <property type="match status" value="1"/>
</dbReference>
<dbReference type="Gene3D" id="3.40.50.1820">
    <property type="entry name" value="alpha/beta hydrolase"/>
    <property type="match status" value="1"/>
</dbReference>
<dbReference type="InterPro" id="IPR029058">
    <property type="entry name" value="AB_hydrolase_fold"/>
</dbReference>
<dbReference type="InterPro" id="IPR002472">
    <property type="entry name" value="Palm_thioest"/>
</dbReference>
<dbReference type="PANTHER" id="PTHR11247:SF8">
    <property type="entry name" value="PALMITOYL-PROTEIN THIOESTERASE 1"/>
    <property type="match status" value="1"/>
</dbReference>
<dbReference type="PANTHER" id="PTHR11247">
    <property type="entry name" value="PALMITOYL-PROTEIN THIOESTERASE/DOLICHYLDIPHOSPHATASE 1"/>
    <property type="match status" value="1"/>
</dbReference>
<dbReference type="Pfam" id="PF02089">
    <property type="entry name" value="Palm_thioest"/>
    <property type="match status" value="1"/>
</dbReference>
<dbReference type="PRINTS" id="PR00414">
    <property type="entry name" value="PPTHIESTRASE"/>
</dbReference>
<dbReference type="SUPFAM" id="SSF53474">
    <property type="entry name" value="alpha/beta-Hydrolases"/>
    <property type="match status" value="1"/>
</dbReference>
<proteinExistence type="evidence at transcript level"/>
<sequence length="306" mass="34247">MASPSCLWLLAVALLPWTCAARALHHLDPPAPLPLVIWHGMGDSCCNPLSMGAIKKMVEKKIPGIYVLSLEIGKTLMEDVENSFFLNVNSQVTTVCQTLAKDPKLQQGYNAMGFSQGGQFLRAVAQRCPSPPMINLISVGGQHQGVFGLPRCPGESSHICDFIRKTLNAGAYSKVVQERLVQAEYWHDPIKEDVYRNHSIFLADINQERGINESYKKNLMALKKFVMVKFLNDSIVDPVDSEWFGFYRSGQAKETIPLQETSLYTQDRLGLKEMDNAGQLVFLATEGDHLQLSEEWFYAHIIPFLG</sequence>
<feature type="signal peptide" evidence="2">
    <location>
        <begin position="1"/>
        <end position="27"/>
    </location>
</feature>
<feature type="chain" id="PRO_0000025551" description="Palmitoyl-protein thioesterase 1">
    <location>
        <begin position="28"/>
        <end position="306"/>
    </location>
</feature>
<feature type="active site" evidence="2">
    <location>
        <position position="115"/>
    </location>
</feature>
<feature type="active site" evidence="2">
    <location>
        <position position="233"/>
    </location>
</feature>
<feature type="active site" evidence="2">
    <location>
        <position position="289"/>
    </location>
</feature>
<feature type="glycosylation site" description="N-linked (GlcNAc...) asparagine" evidence="4">
    <location>
        <position position="197"/>
    </location>
</feature>
<feature type="glycosylation site" description="N-linked (GlcNAc...) asparagine" evidence="4">
    <location>
        <position position="212"/>
    </location>
</feature>
<feature type="glycosylation site" description="N-linked (GlcNAc...) asparagine" evidence="4">
    <location>
        <position position="232"/>
    </location>
</feature>
<feature type="disulfide bond" evidence="3">
    <location>
        <begin position="45"/>
        <end position="46"/>
    </location>
</feature>
<feature type="disulfide bond" evidence="3">
    <location>
        <begin position="96"/>
        <end position="128"/>
    </location>
</feature>
<feature type="disulfide bond" evidence="3">
    <location>
        <begin position="152"/>
        <end position="160"/>
    </location>
</feature>
<organism>
    <name type="scientific">Macaca fascicularis</name>
    <name type="common">Crab-eating macaque</name>
    <name type="synonym">Cynomolgus monkey</name>
    <dbReference type="NCBI Taxonomy" id="9541"/>
    <lineage>
        <taxon>Eukaryota</taxon>
        <taxon>Metazoa</taxon>
        <taxon>Chordata</taxon>
        <taxon>Craniata</taxon>
        <taxon>Vertebrata</taxon>
        <taxon>Euteleostomi</taxon>
        <taxon>Mammalia</taxon>
        <taxon>Eutheria</taxon>
        <taxon>Euarchontoglires</taxon>
        <taxon>Primates</taxon>
        <taxon>Haplorrhini</taxon>
        <taxon>Catarrhini</taxon>
        <taxon>Cercopithecidae</taxon>
        <taxon>Cercopithecinae</taxon>
        <taxon>Macaca</taxon>
    </lineage>
</organism>
<keyword id="KW-1015">Disulfide bond</keyword>
<keyword id="KW-0256">Endoplasmic reticulum</keyword>
<keyword id="KW-0325">Glycoprotein</keyword>
<keyword id="KW-0333">Golgi apparatus</keyword>
<keyword id="KW-0378">Hydrolase</keyword>
<keyword id="KW-0458">Lysosome</keyword>
<keyword id="KW-1185">Reference proteome</keyword>
<keyword id="KW-0964">Secreted</keyword>
<keyword id="KW-0732">Signal</keyword>
<reference key="1">
    <citation type="submission" date="2002-04" db="EMBL/GenBank/DDBJ databases">
        <title>Isolation and characterization of cDNA for macaque neurological disease genes.</title>
        <authorList>
            <person name="Kusuda J."/>
            <person name="Osada N."/>
            <person name="Hida M."/>
            <person name="Sugano S."/>
            <person name="Hashimoto K."/>
        </authorList>
    </citation>
    <scope>NUCLEOTIDE SEQUENCE [LARGE SCALE MRNA]</scope>
    <source>
        <tissue>Parietal cortex</tissue>
    </source>
</reference>
<evidence type="ECO:0000250" key="1">
    <source>
        <dbReference type="UniProtKB" id="O88531"/>
    </source>
</evidence>
<evidence type="ECO:0000250" key="2">
    <source>
        <dbReference type="UniProtKB" id="P45478"/>
    </source>
</evidence>
<evidence type="ECO:0000250" key="3">
    <source>
        <dbReference type="UniProtKB" id="P50897"/>
    </source>
</evidence>
<evidence type="ECO:0000255" key="4"/>
<evidence type="ECO:0000305" key="5"/>
<name>PPT1_MACFA</name>